<gene>
    <name type="primary">THRA</name>
    <name type="synonym">NR1A1</name>
</gene>
<proteinExistence type="evidence at transcript level"/>
<name>THA_APTPA</name>
<evidence type="ECO:0000250" key="1"/>
<evidence type="ECO:0000250" key="2">
    <source>
        <dbReference type="UniProtKB" id="P04625"/>
    </source>
</evidence>
<evidence type="ECO:0000250" key="3">
    <source>
        <dbReference type="UniProtKB" id="P10827"/>
    </source>
</evidence>
<evidence type="ECO:0000250" key="4">
    <source>
        <dbReference type="UniProtKB" id="P10828"/>
    </source>
</evidence>
<evidence type="ECO:0000255" key="5">
    <source>
        <dbReference type="PROSITE-ProRule" id="PRU00407"/>
    </source>
</evidence>
<evidence type="ECO:0000255" key="6">
    <source>
        <dbReference type="PROSITE-ProRule" id="PRU01189"/>
    </source>
</evidence>
<evidence type="ECO:0000256" key="7">
    <source>
        <dbReference type="SAM" id="MobiDB-lite"/>
    </source>
</evidence>
<evidence type="ECO:0000305" key="8"/>
<feature type="chain" id="PRO_0000053429" description="Thyroid hormone receptor alpha">
    <location>
        <begin position="1"/>
        <end position="402" status="greater than"/>
    </location>
</feature>
<feature type="domain" description="NR LBD" evidence="6">
    <location>
        <begin position="161"/>
        <end position="402" status="greater than"/>
    </location>
</feature>
<feature type="DNA-binding region" description="Nuclear receptor" evidence="5">
    <location>
        <begin position="51"/>
        <end position="125"/>
    </location>
</feature>
<feature type="zinc finger region" description="NR C4-type" evidence="5">
    <location>
        <begin position="51"/>
        <end position="71"/>
    </location>
</feature>
<feature type="zinc finger region" description="NR C4-type" evidence="5">
    <location>
        <begin position="89"/>
        <end position="113"/>
    </location>
</feature>
<feature type="region of interest" description="Modulating">
    <location>
        <begin position="1"/>
        <end position="50"/>
    </location>
</feature>
<feature type="region of interest" description="Disordered" evidence="7">
    <location>
        <begin position="1"/>
        <end position="22"/>
    </location>
</feature>
<feature type="binding site" evidence="4">
    <location>
        <position position="51"/>
    </location>
    <ligand>
        <name>Zn(2+)</name>
        <dbReference type="ChEBI" id="CHEBI:29105"/>
        <label>1</label>
    </ligand>
</feature>
<feature type="binding site" evidence="4">
    <location>
        <position position="54"/>
    </location>
    <ligand>
        <name>Zn(2+)</name>
        <dbReference type="ChEBI" id="CHEBI:29105"/>
        <label>1</label>
    </ligand>
</feature>
<feature type="binding site" evidence="4">
    <location>
        <position position="68"/>
    </location>
    <ligand>
        <name>Zn(2+)</name>
        <dbReference type="ChEBI" id="CHEBI:29105"/>
        <label>1</label>
    </ligand>
</feature>
<feature type="binding site" evidence="4">
    <location>
        <position position="71"/>
    </location>
    <ligand>
        <name>Zn(2+)</name>
        <dbReference type="ChEBI" id="CHEBI:29105"/>
        <label>1</label>
    </ligand>
</feature>
<feature type="binding site" evidence="4">
    <location>
        <position position="89"/>
    </location>
    <ligand>
        <name>Zn(2+)</name>
        <dbReference type="ChEBI" id="CHEBI:29105"/>
        <label>2</label>
    </ligand>
</feature>
<feature type="binding site" evidence="4">
    <location>
        <position position="95"/>
    </location>
    <ligand>
        <name>Zn(2+)</name>
        <dbReference type="ChEBI" id="CHEBI:29105"/>
        <label>2</label>
    </ligand>
</feature>
<feature type="binding site" evidence="4">
    <location>
        <position position="105"/>
    </location>
    <ligand>
        <name>Zn(2+)</name>
        <dbReference type="ChEBI" id="CHEBI:29105"/>
        <label>2</label>
    </ligand>
</feature>
<feature type="binding site" evidence="4">
    <location>
        <position position="108"/>
    </location>
    <ligand>
        <name>Zn(2+)</name>
        <dbReference type="ChEBI" id="CHEBI:29105"/>
        <label>2</label>
    </ligand>
</feature>
<feature type="binding site" evidence="3">
    <location>
        <position position="226"/>
    </location>
    <ligand>
        <name>3,3',5-triiodo-L-thyronine</name>
        <dbReference type="ChEBI" id="CHEBI:533015"/>
    </ligand>
</feature>
<feature type="binding site" evidence="3">
    <location>
        <position position="275"/>
    </location>
    <ligand>
        <name>3,3',5-triiodo-L-thyronine</name>
        <dbReference type="ChEBI" id="CHEBI:533015"/>
    </ligand>
</feature>
<feature type="modified residue" description="Phosphoserine; by CK2" evidence="2">
    <location>
        <position position="12"/>
    </location>
</feature>
<feature type="modified residue" description="Phosphoserine" evidence="2">
    <location>
        <position position="28"/>
    </location>
</feature>
<feature type="non-terminal residue">
    <location>
        <position position="402"/>
    </location>
</feature>
<accession>O42295</accession>
<keyword id="KW-0238">DNA-binding</keyword>
<keyword id="KW-0479">Metal-binding</keyword>
<keyword id="KW-0539">Nucleus</keyword>
<keyword id="KW-0597">Phosphoprotein</keyword>
<keyword id="KW-0675">Receptor</keyword>
<keyword id="KW-0804">Transcription</keyword>
<keyword id="KW-0805">Transcription regulation</keyword>
<keyword id="KW-0862">Zinc</keyword>
<keyword id="KW-0863">Zinc-finger</keyword>
<dbReference type="EMBL" id="AJ002363">
    <property type="protein sequence ID" value="CAA05339.1"/>
    <property type="molecule type" value="mRNA"/>
</dbReference>
<dbReference type="SMR" id="O42295"/>
<dbReference type="GO" id="GO:0090575">
    <property type="term" value="C:RNA polymerase II transcription regulator complex"/>
    <property type="evidence" value="ECO:0007669"/>
    <property type="project" value="TreeGrafter"/>
</dbReference>
<dbReference type="GO" id="GO:0004879">
    <property type="term" value="F:nuclear receptor activity"/>
    <property type="evidence" value="ECO:0000250"/>
    <property type="project" value="UniProtKB"/>
</dbReference>
<dbReference type="GO" id="GO:0000978">
    <property type="term" value="F:RNA polymerase II cis-regulatory region sequence-specific DNA binding"/>
    <property type="evidence" value="ECO:0007669"/>
    <property type="project" value="TreeGrafter"/>
</dbReference>
<dbReference type="GO" id="GO:0070324">
    <property type="term" value="F:thyroid hormone binding"/>
    <property type="evidence" value="ECO:0000250"/>
    <property type="project" value="UniProtKB"/>
</dbReference>
<dbReference type="GO" id="GO:0008270">
    <property type="term" value="F:zinc ion binding"/>
    <property type="evidence" value="ECO:0007669"/>
    <property type="project" value="UniProtKB-KW"/>
</dbReference>
<dbReference type="GO" id="GO:0030154">
    <property type="term" value="P:cell differentiation"/>
    <property type="evidence" value="ECO:0007669"/>
    <property type="project" value="TreeGrafter"/>
</dbReference>
<dbReference type="GO" id="GO:0000122">
    <property type="term" value="P:negative regulation of transcription by RNA polymerase II"/>
    <property type="evidence" value="ECO:0007669"/>
    <property type="project" value="TreeGrafter"/>
</dbReference>
<dbReference type="GO" id="GO:0045944">
    <property type="term" value="P:positive regulation of transcription by RNA polymerase II"/>
    <property type="evidence" value="ECO:0007669"/>
    <property type="project" value="TreeGrafter"/>
</dbReference>
<dbReference type="GO" id="GO:0048384">
    <property type="term" value="P:retinoic acid receptor signaling pathway"/>
    <property type="evidence" value="ECO:0007669"/>
    <property type="project" value="TreeGrafter"/>
</dbReference>
<dbReference type="GO" id="GO:0002154">
    <property type="term" value="P:thyroid hormone receptor signaling pathway"/>
    <property type="evidence" value="ECO:0007669"/>
    <property type="project" value="TreeGrafter"/>
</dbReference>
<dbReference type="CDD" id="cd06961">
    <property type="entry name" value="NR_DBD_TR"/>
    <property type="match status" value="1"/>
</dbReference>
<dbReference type="CDD" id="cd06935">
    <property type="entry name" value="NR_LBD_TR"/>
    <property type="match status" value="1"/>
</dbReference>
<dbReference type="FunFam" id="1.10.565.10:FF:000006">
    <property type="entry name" value="Thyroid hormone receptor beta 2"/>
    <property type="match status" value="1"/>
</dbReference>
<dbReference type="FunFam" id="3.30.50.10:FF:000011">
    <property type="entry name" value="Thyroid hormone receptor beta isoform"/>
    <property type="match status" value="1"/>
</dbReference>
<dbReference type="Gene3D" id="3.30.50.10">
    <property type="entry name" value="Erythroid Transcription Factor GATA-1, subunit A"/>
    <property type="match status" value="1"/>
</dbReference>
<dbReference type="Gene3D" id="1.10.565.10">
    <property type="entry name" value="Retinoid X Receptor"/>
    <property type="match status" value="1"/>
</dbReference>
<dbReference type="InterPro" id="IPR035500">
    <property type="entry name" value="NHR-like_dom_sf"/>
</dbReference>
<dbReference type="InterPro" id="IPR000536">
    <property type="entry name" value="Nucl_hrmn_rcpt_lig-bd"/>
</dbReference>
<dbReference type="InterPro" id="IPR050234">
    <property type="entry name" value="Nuclear_hormone_rcpt_NR1"/>
</dbReference>
<dbReference type="InterPro" id="IPR001723">
    <property type="entry name" value="Nuclear_hrmn_rcpt"/>
</dbReference>
<dbReference type="InterPro" id="IPR001728">
    <property type="entry name" value="ThyrH_rcpt"/>
</dbReference>
<dbReference type="InterPro" id="IPR001628">
    <property type="entry name" value="Znf_hrmn_rcpt"/>
</dbReference>
<dbReference type="InterPro" id="IPR013088">
    <property type="entry name" value="Znf_NHR/GATA"/>
</dbReference>
<dbReference type="PANTHER" id="PTHR24082">
    <property type="entry name" value="NUCLEAR HORMONE RECEPTOR"/>
    <property type="match status" value="1"/>
</dbReference>
<dbReference type="PANTHER" id="PTHR24082:SF42">
    <property type="entry name" value="THYROID HORMONE RECEPTOR ALPHA"/>
    <property type="match status" value="1"/>
</dbReference>
<dbReference type="Pfam" id="PF00104">
    <property type="entry name" value="Hormone_recep"/>
    <property type="match status" value="1"/>
</dbReference>
<dbReference type="Pfam" id="PF00105">
    <property type="entry name" value="zf-C4"/>
    <property type="match status" value="1"/>
</dbReference>
<dbReference type="PRINTS" id="PR00398">
    <property type="entry name" value="STRDHORMONER"/>
</dbReference>
<dbReference type="PRINTS" id="PR00047">
    <property type="entry name" value="STROIDFINGER"/>
</dbReference>
<dbReference type="PRINTS" id="PR00546">
    <property type="entry name" value="THYROIDHORMR"/>
</dbReference>
<dbReference type="SMART" id="SM00430">
    <property type="entry name" value="HOLI"/>
    <property type="match status" value="1"/>
</dbReference>
<dbReference type="SMART" id="SM00399">
    <property type="entry name" value="ZnF_C4"/>
    <property type="match status" value="1"/>
</dbReference>
<dbReference type="SUPFAM" id="SSF57716">
    <property type="entry name" value="Glucocorticoid receptor-like (DNA-binding domain)"/>
    <property type="match status" value="1"/>
</dbReference>
<dbReference type="SUPFAM" id="SSF48508">
    <property type="entry name" value="Nuclear receptor ligand-binding domain"/>
    <property type="match status" value="1"/>
</dbReference>
<dbReference type="PROSITE" id="PS51843">
    <property type="entry name" value="NR_LBD"/>
    <property type="match status" value="1"/>
</dbReference>
<dbReference type="PROSITE" id="PS00031">
    <property type="entry name" value="NUCLEAR_REC_DBD_1"/>
    <property type="match status" value="1"/>
</dbReference>
<dbReference type="PROSITE" id="PS51030">
    <property type="entry name" value="NUCLEAR_REC_DBD_2"/>
    <property type="match status" value="1"/>
</dbReference>
<comment type="function">
    <text>Nuclear hormone receptor that can act as a repressor or activator of transcription. High affinity receptor for thyroid hormones, including triiodothyronine and thyroxine.</text>
</comment>
<comment type="subunit">
    <text evidence="1">Probably interacts with SFPQ.</text>
</comment>
<comment type="subcellular location">
    <subcellularLocation>
        <location>Nucleus</location>
    </subcellularLocation>
</comment>
<comment type="domain">
    <text>Composed of three domains: a modulating N-terminal domain, a DNA-binding domain and a C-terminal ligand-binding domain.</text>
</comment>
<comment type="similarity">
    <text evidence="8">Belongs to the nuclear hormone receptor family. NR1 subfamily.</text>
</comment>
<sequence>MEQKPSTLDPLSEPEDTRWLDGKRKRKSSQCLVKSSMSGYIPSYLDKDEQCVVCGDKATGYHYRCITCEGCKGFFRRTIQKNLHPTYSCKYDGCCVIDKITRNQCQLCRFKKCISVGMAMDLVLDDSKRVAKRKLIEENRERRRKEEMIKSLQHRPNPSAEEWELIHVVTEAHRSTNAQGSHWKQKRKFLPEDIGQSPMASMPDGDKVDLEAFSEFTKIITPAITRVVDFAKKLPMFSELPCEDQIILLKGCCMEIMSLRAAVRYDPESETLTLSGEMAVKREQLKNGGLGVVSDAIFDLGKSLSAFNLDDTEVALLQAVLLMSSDRTGLICVEKIEKCQETYLLAFEHYINYRKHNIPHFWPKLLMKVTDLRMIRACHASRFLHMKVECPTELFPPLFLEV</sequence>
<protein>
    <recommendedName>
        <fullName>Thyroid hormone receptor alpha</fullName>
    </recommendedName>
    <alternativeName>
        <fullName>Nuclear receptor subfamily 1 group A member 1</fullName>
    </alternativeName>
</protein>
<reference key="1">
    <citation type="submission" date="1997-10" db="EMBL/GenBank/DDBJ databases">
        <authorList>
            <person name="Vera N."/>
            <person name="Lachuer J."/>
            <person name="Duchamp C."/>
            <person name="Moulin C."/>
            <person name="Cohen-Adad F."/>
            <person name="Barre H."/>
        </authorList>
    </citation>
    <scope>NUCLEOTIDE SEQUENCE [MRNA]</scope>
    <source>
        <tissue>Liver</tissue>
    </source>
</reference>
<organism>
    <name type="scientific">Aptenodytes patagonicus</name>
    <name type="common">King penguin</name>
    <dbReference type="NCBI Taxonomy" id="9234"/>
    <lineage>
        <taxon>Eukaryota</taxon>
        <taxon>Metazoa</taxon>
        <taxon>Chordata</taxon>
        <taxon>Craniata</taxon>
        <taxon>Vertebrata</taxon>
        <taxon>Euteleostomi</taxon>
        <taxon>Archelosauria</taxon>
        <taxon>Archosauria</taxon>
        <taxon>Dinosauria</taxon>
        <taxon>Saurischia</taxon>
        <taxon>Theropoda</taxon>
        <taxon>Coelurosauria</taxon>
        <taxon>Aves</taxon>
        <taxon>Neognathae</taxon>
        <taxon>Neoaves</taxon>
        <taxon>Aequornithes</taxon>
        <taxon>Sphenisciformes</taxon>
        <taxon>Spheniscidae</taxon>
        <taxon>Aptenodytes</taxon>
    </lineage>
</organism>